<organism>
    <name type="scientific">Xenopus tropicalis</name>
    <name type="common">Western clawed frog</name>
    <name type="synonym">Silurana tropicalis</name>
    <dbReference type="NCBI Taxonomy" id="8364"/>
    <lineage>
        <taxon>Eukaryota</taxon>
        <taxon>Metazoa</taxon>
        <taxon>Chordata</taxon>
        <taxon>Craniata</taxon>
        <taxon>Vertebrata</taxon>
        <taxon>Euteleostomi</taxon>
        <taxon>Amphibia</taxon>
        <taxon>Batrachia</taxon>
        <taxon>Anura</taxon>
        <taxon>Pipoidea</taxon>
        <taxon>Pipidae</taxon>
        <taxon>Xenopodinae</taxon>
        <taxon>Xenopus</taxon>
        <taxon>Silurana</taxon>
    </lineage>
</organism>
<evidence type="ECO:0000250" key="1"/>
<evidence type="ECO:0000255" key="2">
    <source>
        <dbReference type="PROSITE-ProRule" id="PRU00507"/>
    </source>
</evidence>
<evidence type="ECO:0000256" key="3">
    <source>
        <dbReference type="SAM" id="MobiDB-lite"/>
    </source>
</evidence>
<evidence type="ECO:0000305" key="4"/>
<proteinExistence type="evidence at transcript level"/>
<name>NACA_XENTR</name>
<keyword id="KW-0653">Protein transport</keyword>
<keyword id="KW-1185">Reference proteome</keyword>
<keyword id="KW-0813">Transport</keyword>
<dbReference type="EMBL" id="BC079953">
    <property type="protein sequence ID" value="AAH79953.1"/>
    <property type="molecule type" value="mRNA"/>
</dbReference>
<dbReference type="RefSeq" id="NP_001007513.1">
    <property type="nucleotide sequence ID" value="NM_001007512.2"/>
</dbReference>
<dbReference type="SMR" id="Q68F90"/>
<dbReference type="FunCoup" id="Q68F90">
    <property type="interactions" value="629"/>
</dbReference>
<dbReference type="STRING" id="8364.ENSXETP00000054220"/>
<dbReference type="PaxDb" id="8364-ENSXETP00000009603"/>
<dbReference type="DNASU" id="493239"/>
<dbReference type="GeneID" id="493239"/>
<dbReference type="KEGG" id="xtr:493239"/>
<dbReference type="AGR" id="Xenbase:XB-GENE-969062"/>
<dbReference type="CTD" id="4666"/>
<dbReference type="Xenbase" id="XB-GENE-969062">
    <property type="gene designation" value="naca"/>
</dbReference>
<dbReference type="eggNOG" id="KOG2239">
    <property type="taxonomic scope" value="Eukaryota"/>
</dbReference>
<dbReference type="InParanoid" id="Q68F90"/>
<dbReference type="OrthoDB" id="3169036at2759"/>
<dbReference type="Proteomes" id="UP000008143">
    <property type="component" value="Chromosome 2"/>
</dbReference>
<dbReference type="GO" id="GO:0005854">
    <property type="term" value="C:nascent polypeptide-associated complex"/>
    <property type="evidence" value="ECO:0007669"/>
    <property type="project" value="InterPro"/>
</dbReference>
<dbReference type="GO" id="GO:0015031">
    <property type="term" value="P:protein transport"/>
    <property type="evidence" value="ECO:0007669"/>
    <property type="project" value="UniProtKB-KW"/>
</dbReference>
<dbReference type="CDD" id="cd22054">
    <property type="entry name" value="NAC_NACA"/>
    <property type="match status" value="1"/>
</dbReference>
<dbReference type="CDD" id="cd14415">
    <property type="entry name" value="UBA_NACA_NACP1"/>
    <property type="match status" value="1"/>
</dbReference>
<dbReference type="FunFam" id="2.20.70.30:FF:000002">
    <property type="entry name" value="Nascent polypeptide-associated complex (NAC), alpha subunit"/>
    <property type="match status" value="1"/>
</dbReference>
<dbReference type="FunFam" id="1.10.8.10:FF:000006">
    <property type="entry name" value="Putative nascent polypeptide-associated complex subunit alpha"/>
    <property type="match status" value="1"/>
</dbReference>
<dbReference type="Gene3D" id="1.10.8.10">
    <property type="entry name" value="DNA helicase RuvA subunit, C-terminal domain"/>
    <property type="match status" value="1"/>
</dbReference>
<dbReference type="Gene3D" id="2.20.70.30">
    <property type="entry name" value="Nascent polypeptide-associated complex domain"/>
    <property type="match status" value="1"/>
</dbReference>
<dbReference type="InterPro" id="IPR016641">
    <property type="entry name" value="EGD2/NACA0like"/>
</dbReference>
<dbReference type="InterPro" id="IPR044034">
    <property type="entry name" value="NAC-like_UBA"/>
</dbReference>
<dbReference type="InterPro" id="IPR038187">
    <property type="entry name" value="NAC_A/B_dom_sf"/>
</dbReference>
<dbReference type="InterPro" id="IPR002715">
    <property type="entry name" value="Nas_poly-pep-assoc_cplx_dom"/>
</dbReference>
<dbReference type="PANTHER" id="PTHR21713">
    <property type="entry name" value="NASCENT POLYPEPTIDE ASSOCIATED COMPLEX ALPHA SUBUNIT-RELATED"/>
    <property type="match status" value="1"/>
</dbReference>
<dbReference type="Pfam" id="PF01849">
    <property type="entry name" value="NAC"/>
    <property type="match status" value="1"/>
</dbReference>
<dbReference type="Pfam" id="PF19026">
    <property type="entry name" value="UBA_HYPK"/>
    <property type="match status" value="1"/>
</dbReference>
<dbReference type="PIRSF" id="PIRSF015901">
    <property type="entry name" value="NAC_alpha"/>
    <property type="match status" value="1"/>
</dbReference>
<dbReference type="SMART" id="SM01407">
    <property type="entry name" value="NAC"/>
    <property type="match status" value="1"/>
</dbReference>
<dbReference type="PROSITE" id="PS51151">
    <property type="entry name" value="NAC_AB"/>
    <property type="match status" value="1"/>
</dbReference>
<reference key="1">
    <citation type="submission" date="2004-08" db="EMBL/GenBank/DDBJ databases">
        <authorList>
            <consortium name="NIH - Xenopus Gene Collection (XGC) project"/>
        </authorList>
    </citation>
    <scope>NUCLEOTIDE SEQUENCE [LARGE SCALE MRNA]</scope>
    <source>
        <tissue>Embryo</tissue>
    </source>
</reference>
<sequence length="214" mass="23279">MPGEATETVPAAEQELHQPQAETGSGTESDSDDSPPELEQDSTQTTTQQAQLAAAAEIDEEPVSKAKQSRSEKKARKAMSKLGLRQVTGVTRVTIRKSKNILFVITKPDVYKSPASDTYIVFGEAKIEDLSQQAQLAAAEKFKVQGEAVSNIQENTQTPTVQEESEEEEVDETGVEVKDIELVMSQANVSRAKAVRALKNNSNDIVNAIMELTM</sequence>
<accession>Q68F90</accession>
<feature type="chain" id="PRO_0000135583" description="Nascent polypeptide-associated complex subunit alpha">
    <location>
        <begin position="1"/>
        <end position="214"/>
    </location>
</feature>
<feature type="domain" description="NAC-A/B" evidence="2">
    <location>
        <begin position="69"/>
        <end position="134"/>
    </location>
</feature>
<feature type="domain" description="UBA">
    <location>
        <begin position="175"/>
        <end position="212"/>
    </location>
</feature>
<feature type="region of interest" description="Disordered" evidence="3">
    <location>
        <begin position="1"/>
        <end position="80"/>
    </location>
</feature>
<feature type="compositionally biased region" description="Acidic residues" evidence="3">
    <location>
        <begin position="29"/>
        <end position="40"/>
    </location>
</feature>
<feature type="compositionally biased region" description="Low complexity" evidence="3">
    <location>
        <begin position="41"/>
        <end position="56"/>
    </location>
</feature>
<protein>
    <recommendedName>
        <fullName>Nascent polypeptide-associated complex subunit alpha</fullName>
        <shortName>NAC-alpha</shortName>
    </recommendedName>
    <alternativeName>
        <fullName>Alpha-NAC</fullName>
    </alternativeName>
</protein>
<comment type="function">
    <text evidence="1">May promote appropriate targeting of ribosome-nascent polypeptide complexes.</text>
</comment>
<comment type="similarity">
    <text evidence="4">Belongs to the NAC-alpha family.</text>
</comment>
<gene>
    <name type="primary">naca</name>
</gene>